<feature type="chain" id="PRO_0000389612" description="Serine/threonine-protein kinase sax-1">
    <location>
        <begin position="1"/>
        <end position="472"/>
    </location>
</feature>
<feature type="domain" description="Protein kinase" evidence="6">
    <location>
        <begin position="87"/>
        <end position="381"/>
    </location>
</feature>
<feature type="domain" description="AGC-kinase C-terminal" evidence="7">
    <location>
        <begin position="382"/>
        <end position="452"/>
    </location>
</feature>
<feature type="active site" description="Proton acceptor" evidence="2 6 8">
    <location>
        <position position="210"/>
    </location>
</feature>
<feature type="binding site" evidence="2 6">
    <location>
        <begin position="93"/>
        <end position="101"/>
    </location>
    <ligand>
        <name>ATP</name>
        <dbReference type="ChEBI" id="CHEBI:30616"/>
    </ligand>
</feature>
<feature type="binding site" evidence="2 6">
    <location>
        <position position="116"/>
    </location>
    <ligand>
        <name>ATP</name>
        <dbReference type="ChEBI" id="CHEBI:30616"/>
    </ligand>
</feature>
<reference evidence="9" key="1">
    <citation type="journal article" date="2003" name="PLoS Biol.">
        <title>The genome sequence of Caenorhabditis briggsae: a platform for comparative genomics.</title>
        <authorList>
            <person name="Stein L.D."/>
            <person name="Bao Z."/>
            <person name="Blasiar D."/>
            <person name="Blumenthal T."/>
            <person name="Brent M.R."/>
            <person name="Chen N."/>
            <person name="Chinwalla A."/>
            <person name="Clarke L."/>
            <person name="Clee C."/>
            <person name="Coghlan A."/>
            <person name="Coulson A."/>
            <person name="D'Eustachio P."/>
            <person name="Fitch D.H.A."/>
            <person name="Fulton L.A."/>
            <person name="Fulton R.E."/>
            <person name="Griffiths-Jones S."/>
            <person name="Harris T.W."/>
            <person name="Hillier L.W."/>
            <person name="Kamath R."/>
            <person name="Kuwabara P.E."/>
            <person name="Mardis E.R."/>
            <person name="Marra M.A."/>
            <person name="Miner T.L."/>
            <person name="Minx P."/>
            <person name="Mullikin J.C."/>
            <person name="Plumb R.W."/>
            <person name="Rogers J."/>
            <person name="Schein J.E."/>
            <person name="Sohrmann M."/>
            <person name="Spieth J."/>
            <person name="Stajich J.E."/>
            <person name="Wei C."/>
            <person name="Willey D."/>
            <person name="Wilson R.K."/>
            <person name="Durbin R.M."/>
            <person name="Waterston R.H."/>
        </authorList>
    </citation>
    <scope>NUCLEOTIDE SEQUENCE [LARGE SCALE GENOMIC DNA]</scope>
    <source>
        <strain evidence="9">AF16</strain>
    </source>
</reference>
<organism>
    <name type="scientific">Caenorhabditis briggsae</name>
    <dbReference type="NCBI Taxonomy" id="6238"/>
    <lineage>
        <taxon>Eukaryota</taxon>
        <taxon>Metazoa</taxon>
        <taxon>Ecdysozoa</taxon>
        <taxon>Nematoda</taxon>
        <taxon>Chromadorea</taxon>
        <taxon>Rhabditida</taxon>
        <taxon>Rhabditina</taxon>
        <taxon>Rhabditomorpha</taxon>
        <taxon>Rhabditoidea</taxon>
        <taxon>Rhabditidae</taxon>
        <taxon>Peloderinae</taxon>
        <taxon>Caenorhabditis</taxon>
    </lineage>
</organism>
<sequence>MGDVAPEVEISQYTKDKASCTRISIESYYSKRVTQCAERENRLKKLEEDMSARGLSDDEKDEKRKIHHSKETDYLRLKRTRLTVNDFESLKVIGRGAFGEVRLVQKHDTGHIYAMKILRKSEMVEKEQTAHVRAERDILSEADCDWVVKMYYSFQDYSNLYLVMEFLPGGDMMTLLIKKDTLTEEATQFYVAEAALAIQFIHNLGFIHRDIKPDNLLLDARGHVKLSDFGLCTGLKKFHRTDHYRNWPVTLPPDFISKPFESKRKAETWKRNRRAYAYSTVGTPDYIAPEVFQPNGYTKSCDWWSLGVIMYEMLIGYPPFCSELPQETYRKVINWQQTLVFPSDVPISIEAKATIKRFCCEAERRLGNHGGLDEIKQCPFFRRIDWNHIRERPPPIRVTVKSIDDTSNFDDFPDEDLSWPTSTLIRPEEQPGRRGEFVDFTYKRFDGLTQKMRYSDLKKQAKKNKKGQGSSD</sequence>
<accession>A8XJL7</accession>
<keyword id="KW-0067">ATP-binding</keyword>
<keyword id="KW-0963">Cytoplasm</keyword>
<keyword id="KW-0217">Developmental protein</keyword>
<keyword id="KW-0418">Kinase</keyword>
<keyword id="KW-0460">Magnesium</keyword>
<keyword id="KW-0479">Metal-binding</keyword>
<keyword id="KW-0524">Neurogenesis</keyword>
<keyword id="KW-0547">Nucleotide-binding</keyword>
<keyword id="KW-0539">Nucleus</keyword>
<keyword id="KW-0597">Phosphoprotein</keyword>
<keyword id="KW-1185">Reference proteome</keyword>
<keyword id="KW-0723">Serine/threonine-protein kinase</keyword>
<keyword id="KW-0808">Transferase</keyword>
<dbReference type="EC" id="2.7.11.1"/>
<dbReference type="EMBL" id="HE600983">
    <property type="protein sequence ID" value="CAP32843.2"/>
    <property type="molecule type" value="Genomic_DNA"/>
</dbReference>
<dbReference type="SMR" id="A8XJL7"/>
<dbReference type="FunCoup" id="A8XJL7">
    <property type="interactions" value="2976"/>
</dbReference>
<dbReference type="STRING" id="6238.A8XJL7"/>
<dbReference type="EnsemblMetazoa" id="CBG14249a.1">
    <property type="protein sequence ID" value="CBG14249a.1"/>
    <property type="gene ID" value="WBGene00034813"/>
</dbReference>
<dbReference type="WormBase" id="CBG14249a">
    <property type="protein sequence ID" value="CBP35530"/>
    <property type="gene ID" value="WBGene00034813"/>
    <property type="gene designation" value="Cbr-sax-1"/>
</dbReference>
<dbReference type="eggNOG" id="KOG0605">
    <property type="taxonomic scope" value="Eukaryota"/>
</dbReference>
<dbReference type="HOGENOM" id="CLU_000288_67_2_1"/>
<dbReference type="InParanoid" id="A8XJL7"/>
<dbReference type="OMA" id="HDNAYYQ"/>
<dbReference type="Proteomes" id="UP000008549">
    <property type="component" value="Unassembled WGS sequence"/>
</dbReference>
<dbReference type="GO" id="GO:0005737">
    <property type="term" value="C:cytoplasm"/>
    <property type="evidence" value="ECO:0007669"/>
    <property type="project" value="UniProtKB-SubCell"/>
</dbReference>
<dbReference type="GO" id="GO:0005634">
    <property type="term" value="C:nucleus"/>
    <property type="evidence" value="ECO:0007669"/>
    <property type="project" value="UniProtKB-SubCell"/>
</dbReference>
<dbReference type="GO" id="GO:0005524">
    <property type="term" value="F:ATP binding"/>
    <property type="evidence" value="ECO:0007669"/>
    <property type="project" value="UniProtKB-KW"/>
</dbReference>
<dbReference type="GO" id="GO:0046872">
    <property type="term" value="F:metal ion binding"/>
    <property type="evidence" value="ECO:0007669"/>
    <property type="project" value="UniProtKB-KW"/>
</dbReference>
<dbReference type="GO" id="GO:0106310">
    <property type="term" value="F:protein serine kinase activity"/>
    <property type="evidence" value="ECO:0007669"/>
    <property type="project" value="RHEA"/>
</dbReference>
<dbReference type="GO" id="GO:0004674">
    <property type="term" value="F:protein serine/threonine kinase activity"/>
    <property type="evidence" value="ECO:0000318"/>
    <property type="project" value="GO_Central"/>
</dbReference>
<dbReference type="GO" id="GO:0035556">
    <property type="term" value="P:intracellular signal transduction"/>
    <property type="evidence" value="ECO:0000318"/>
    <property type="project" value="GO_Central"/>
</dbReference>
<dbReference type="GO" id="GO:0007399">
    <property type="term" value="P:nervous system development"/>
    <property type="evidence" value="ECO:0007669"/>
    <property type="project" value="UniProtKB-KW"/>
</dbReference>
<dbReference type="CDD" id="cd21775">
    <property type="entry name" value="MobB_NDR-like"/>
    <property type="match status" value="1"/>
</dbReference>
<dbReference type="CDD" id="cd05599">
    <property type="entry name" value="STKc_NDR_like"/>
    <property type="match status" value="1"/>
</dbReference>
<dbReference type="FunFam" id="1.10.510.10:FF:000570">
    <property type="entry name" value="Non-specific serine/threonine protein kinase"/>
    <property type="match status" value="1"/>
</dbReference>
<dbReference type="FunFam" id="3.30.200.20:FF:000118">
    <property type="entry name" value="Non-specific serine/threonine protein kinase"/>
    <property type="match status" value="1"/>
</dbReference>
<dbReference type="Gene3D" id="3.30.200.20">
    <property type="entry name" value="Phosphorylase Kinase, domain 1"/>
    <property type="match status" value="1"/>
</dbReference>
<dbReference type="Gene3D" id="1.10.510.10">
    <property type="entry name" value="Transferase(Phosphotransferase) domain 1"/>
    <property type="match status" value="1"/>
</dbReference>
<dbReference type="InterPro" id="IPR000961">
    <property type="entry name" value="AGC-kinase_C"/>
</dbReference>
<dbReference type="InterPro" id="IPR011009">
    <property type="entry name" value="Kinase-like_dom_sf"/>
</dbReference>
<dbReference type="InterPro" id="IPR017892">
    <property type="entry name" value="Pkinase_C"/>
</dbReference>
<dbReference type="InterPro" id="IPR000719">
    <property type="entry name" value="Prot_kinase_dom"/>
</dbReference>
<dbReference type="InterPro" id="IPR017441">
    <property type="entry name" value="Protein_kinase_ATP_BS"/>
</dbReference>
<dbReference type="InterPro" id="IPR050839">
    <property type="entry name" value="Rho-assoc_Ser/Thr_Kinase"/>
</dbReference>
<dbReference type="InterPro" id="IPR008271">
    <property type="entry name" value="Ser/Thr_kinase_AS"/>
</dbReference>
<dbReference type="PANTHER" id="PTHR22988">
    <property type="entry name" value="MYOTONIC DYSTROPHY S/T KINASE-RELATED"/>
    <property type="match status" value="1"/>
</dbReference>
<dbReference type="Pfam" id="PF00069">
    <property type="entry name" value="Pkinase"/>
    <property type="match status" value="1"/>
</dbReference>
<dbReference type="Pfam" id="PF00433">
    <property type="entry name" value="Pkinase_C"/>
    <property type="match status" value="1"/>
</dbReference>
<dbReference type="SMART" id="SM00133">
    <property type="entry name" value="S_TK_X"/>
    <property type="match status" value="1"/>
</dbReference>
<dbReference type="SMART" id="SM00220">
    <property type="entry name" value="S_TKc"/>
    <property type="match status" value="1"/>
</dbReference>
<dbReference type="SUPFAM" id="SSF56112">
    <property type="entry name" value="Protein kinase-like (PK-like)"/>
    <property type="match status" value="1"/>
</dbReference>
<dbReference type="PROSITE" id="PS51285">
    <property type="entry name" value="AGC_KINASE_CTER"/>
    <property type="match status" value="1"/>
</dbReference>
<dbReference type="PROSITE" id="PS00107">
    <property type="entry name" value="PROTEIN_KINASE_ATP"/>
    <property type="match status" value="1"/>
</dbReference>
<dbReference type="PROSITE" id="PS50011">
    <property type="entry name" value="PROTEIN_KINASE_DOM"/>
    <property type="match status" value="1"/>
</dbReference>
<dbReference type="PROSITE" id="PS00108">
    <property type="entry name" value="PROTEIN_KINASE_ST"/>
    <property type="match status" value="1"/>
</dbReference>
<comment type="function">
    <text evidence="3">Acts with sax-2 to restrict the growth of both primary and secondary neurites. Regulates mechanosensory tiling by controlling the termination point of sensory dendrites (By similarity).</text>
</comment>
<comment type="catalytic activity">
    <reaction evidence="4">
        <text>L-seryl-[protein] + ATP = O-phospho-L-seryl-[protein] + ADP + H(+)</text>
        <dbReference type="Rhea" id="RHEA:17989"/>
        <dbReference type="Rhea" id="RHEA-COMP:9863"/>
        <dbReference type="Rhea" id="RHEA-COMP:11604"/>
        <dbReference type="ChEBI" id="CHEBI:15378"/>
        <dbReference type="ChEBI" id="CHEBI:29999"/>
        <dbReference type="ChEBI" id="CHEBI:30616"/>
        <dbReference type="ChEBI" id="CHEBI:83421"/>
        <dbReference type="ChEBI" id="CHEBI:456216"/>
        <dbReference type="EC" id="2.7.11.1"/>
    </reaction>
</comment>
<comment type="catalytic activity">
    <reaction evidence="4">
        <text>L-threonyl-[protein] + ATP = O-phospho-L-threonyl-[protein] + ADP + H(+)</text>
        <dbReference type="Rhea" id="RHEA:46608"/>
        <dbReference type="Rhea" id="RHEA-COMP:11060"/>
        <dbReference type="Rhea" id="RHEA-COMP:11605"/>
        <dbReference type="ChEBI" id="CHEBI:15378"/>
        <dbReference type="ChEBI" id="CHEBI:30013"/>
        <dbReference type="ChEBI" id="CHEBI:30616"/>
        <dbReference type="ChEBI" id="CHEBI:61977"/>
        <dbReference type="ChEBI" id="CHEBI:456216"/>
        <dbReference type="EC" id="2.7.11.1"/>
    </reaction>
</comment>
<comment type="cofactor">
    <cofactor evidence="4">
        <name>Mg(2+)</name>
        <dbReference type="ChEBI" id="CHEBI:18420"/>
    </cofactor>
</comment>
<comment type="subcellular location">
    <subcellularLocation>
        <location evidence="1">Cytoplasm</location>
    </subcellularLocation>
    <subcellularLocation>
        <location evidence="3">Nucleus</location>
    </subcellularLocation>
</comment>
<comment type="similarity">
    <text evidence="5">Belongs to the protein kinase superfamily. AGC Ser/Thr protein kinase family.</text>
</comment>
<proteinExistence type="inferred from homology"/>
<name>SAX1_CAEBR</name>
<protein>
    <recommendedName>
        <fullName evidence="3">Serine/threonine-protein kinase sax-1</fullName>
        <ecNumber>2.7.11.1</ecNumber>
    </recommendedName>
    <alternativeName>
        <fullName evidence="3 4">NDR protein kinase</fullName>
    </alternativeName>
    <alternativeName>
        <fullName evidence="3">Sensory axon guidance protein 1</fullName>
    </alternativeName>
</protein>
<evidence type="ECO:0000250" key="1"/>
<evidence type="ECO:0000250" key="2">
    <source>
        <dbReference type="UniProtKB" id="P28523"/>
    </source>
</evidence>
<evidence type="ECO:0000250" key="3">
    <source>
        <dbReference type="UniProtKB" id="Q2L6W9"/>
    </source>
</evidence>
<evidence type="ECO:0000250" key="4">
    <source>
        <dbReference type="UniProtKB" id="Q9Y2H1"/>
    </source>
</evidence>
<evidence type="ECO:0000255" key="5"/>
<evidence type="ECO:0000255" key="6">
    <source>
        <dbReference type="PROSITE-ProRule" id="PRU00159"/>
    </source>
</evidence>
<evidence type="ECO:0000255" key="7">
    <source>
        <dbReference type="PROSITE-ProRule" id="PRU00618"/>
    </source>
</evidence>
<evidence type="ECO:0000255" key="8">
    <source>
        <dbReference type="PROSITE-ProRule" id="PRU10027"/>
    </source>
</evidence>
<evidence type="ECO:0000312" key="9">
    <source>
        <dbReference type="EMBL" id="CAP32843.2"/>
    </source>
</evidence>
<gene>
    <name evidence="9" type="primary">sax-1</name>
    <name type="ORF">CBG14249</name>
</gene>